<reference key="1">
    <citation type="journal article" date="2009" name="Genome Biol.">
        <title>Genomic and genetic analyses of diversity and plant interactions of Pseudomonas fluorescens.</title>
        <authorList>
            <person name="Silby M.W."/>
            <person name="Cerdeno-Tarraga A.M."/>
            <person name="Vernikos G.S."/>
            <person name="Giddens S.R."/>
            <person name="Jackson R.W."/>
            <person name="Preston G.M."/>
            <person name="Zhang X.-X."/>
            <person name="Moon C.D."/>
            <person name="Gehrig S.M."/>
            <person name="Godfrey S.A.C."/>
            <person name="Knight C.G."/>
            <person name="Malone J.G."/>
            <person name="Robinson Z."/>
            <person name="Spiers A.J."/>
            <person name="Harris S."/>
            <person name="Challis G.L."/>
            <person name="Yaxley A.M."/>
            <person name="Harris D."/>
            <person name="Seeger K."/>
            <person name="Murphy L."/>
            <person name="Rutter S."/>
            <person name="Squares R."/>
            <person name="Quail M.A."/>
            <person name="Saunders E."/>
            <person name="Mavromatis K."/>
            <person name="Brettin T.S."/>
            <person name="Bentley S.D."/>
            <person name="Hothersall J."/>
            <person name="Stephens E."/>
            <person name="Thomas C.M."/>
            <person name="Parkhill J."/>
            <person name="Levy S.B."/>
            <person name="Rainey P.B."/>
            <person name="Thomson N.R."/>
        </authorList>
    </citation>
    <scope>NUCLEOTIDE SEQUENCE [LARGE SCALE GENOMIC DNA]</scope>
    <source>
        <strain>SBW25</strain>
    </source>
</reference>
<organism>
    <name type="scientific">Pseudomonas fluorescens (strain SBW25)</name>
    <dbReference type="NCBI Taxonomy" id="216595"/>
    <lineage>
        <taxon>Bacteria</taxon>
        <taxon>Pseudomonadati</taxon>
        <taxon>Pseudomonadota</taxon>
        <taxon>Gammaproteobacteria</taxon>
        <taxon>Pseudomonadales</taxon>
        <taxon>Pseudomonadaceae</taxon>
        <taxon>Pseudomonas</taxon>
    </lineage>
</organism>
<keyword id="KW-0067">ATP-binding</keyword>
<keyword id="KW-0319">Glycerol metabolism</keyword>
<keyword id="KW-0418">Kinase</keyword>
<keyword id="KW-0547">Nucleotide-binding</keyword>
<keyword id="KW-0808">Transferase</keyword>
<feature type="chain" id="PRO_1000203959" description="Glycerol kinase">
    <location>
        <begin position="1"/>
        <end position="501"/>
    </location>
</feature>
<feature type="binding site" evidence="1">
    <location>
        <position position="17"/>
    </location>
    <ligand>
        <name>ADP</name>
        <dbReference type="ChEBI" id="CHEBI:456216"/>
    </ligand>
</feature>
<feature type="binding site" evidence="1">
    <location>
        <position position="17"/>
    </location>
    <ligand>
        <name>ATP</name>
        <dbReference type="ChEBI" id="CHEBI:30616"/>
    </ligand>
</feature>
<feature type="binding site" evidence="1">
    <location>
        <position position="17"/>
    </location>
    <ligand>
        <name>sn-glycerol 3-phosphate</name>
        <dbReference type="ChEBI" id="CHEBI:57597"/>
    </ligand>
</feature>
<feature type="binding site" evidence="1">
    <location>
        <position position="18"/>
    </location>
    <ligand>
        <name>ATP</name>
        <dbReference type="ChEBI" id="CHEBI:30616"/>
    </ligand>
</feature>
<feature type="binding site" evidence="1">
    <location>
        <position position="19"/>
    </location>
    <ligand>
        <name>ATP</name>
        <dbReference type="ChEBI" id="CHEBI:30616"/>
    </ligand>
</feature>
<feature type="binding site" evidence="1">
    <location>
        <position position="21"/>
    </location>
    <ligand>
        <name>ADP</name>
        <dbReference type="ChEBI" id="CHEBI:456216"/>
    </ligand>
</feature>
<feature type="binding site" evidence="1">
    <location>
        <position position="87"/>
    </location>
    <ligand>
        <name>glycerol</name>
        <dbReference type="ChEBI" id="CHEBI:17754"/>
    </ligand>
</feature>
<feature type="binding site" evidence="1">
    <location>
        <position position="87"/>
    </location>
    <ligand>
        <name>sn-glycerol 3-phosphate</name>
        <dbReference type="ChEBI" id="CHEBI:57597"/>
    </ligand>
</feature>
<feature type="binding site" evidence="1">
    <location>
        <position position="88"/>
    </location>
    <ligand>
        <name>glycerol</name>
        <dbReference type="ChEBI" id="CHEBI:17754"/>
    </ligand>
</feature>
<feature type="binding site" evidence="1">
    <location>
        <position position="88"/>
    </location>
    <ligand>
        <name>sn-glycerol 3-phosphate</name>
        <dbReference type="ChEBI" id="CHEBI:57597"/>
    </ligand>
</feature>
<feature type="binding site" evidence="1">
    <location>
        <position position="139"/>
    </location>
    <ligand>
        <name>glycerol</name>
        <dbReference type="ChEBI" id="CHEBI:17754"/>
    </ligand>
</feature>
<feature type="binding site" evidence="1">
    <location>
        <position position="139"/>
    </location>
    <ligand>
        <name>sn-glycerol 3-phosphate</name>
        <dbReference type="ChEBI" id="CHEBI:57597"/>
    </ligand>
</feature>
<feature type="binding site" evidence="1">
    <location>
        <position position="243"/>
    </location>
    <ligand>
        <name>glycerol</name>
        <dbReference type="ChEBI" id="CHEBI:17754"/>
    </ligand>
</feature>
<feature type="binding site" evidence="1">
    <location>
        <position position="243"/>
    </location>
    <ligand>
        <name>sn-glycerol 3-phosphate</name>
        <dbReference type="ChEBI" id="CHEBI:57597"/>
    </ligand>
</feature>
<feature type="binding site" evidence="1">
    <location>
        <position position="244"/>
    </location>
    <ligand>
        <name>glycerol</name>
        <dbReference type="ChEBI" id="CHEBI:17754"/>
    </ligand>
</feature>
<feature type="binding site" evidence="1">
    <location>
        <position position="265"/>
    </location>
    <ligand>
        <name>ADP</name>
        <dbReference type="ChEBI" id="CHEBI:456216"/>
    </ligand>
</feature>
<feature type="binding site" evidence="1">
    <location>
        <position position="265"/>
    </location>
    <ligand>
        <name>ATP</name>
        <dbReference type="ChEBI" id="CHEBI:30616"/>
    </ligand>
</feature>
<feature type="binding site" evidence="1">
    <location>
        <position position="308"/>
    </location>
    <ligand>
        <name>ADP</name>
        <dbReference type="ChEBI" id="CHEBI:456216"/>
    </ligand>
</feature>
<feature type="binding site" evidence="1">
    <location>
        <position position="308"/>
    </location>
    <ligand>
        <name>ATP</name>
        <dbReference type="ChEBI" id="CHEBI:30616"/>
    </ligand>
</feature>
<feature type="binding site" evidence="1">
    <location>
        <position position="312"/>
    </location>
    <ligand>
        <name>ATP</name>
        <dbReference type="ChEBI" id="CHEBI:30616"/>
    </ligand>
</feature>
<feature type="binding site" evidence="1">
    <location>
        <position position="409"/>
    </location>
    <ligand>
        <name>ADP</name>
        <dbReference type="ChEBI" id="CHEBI:456216"/>
    </ligand>
</feature>
<feature type="binding site" evidence="1">
    <location>
        <position position="409"/>
    </location>
    <ligand>
        <name>ATP</name>
        <dbReference type="ChEBI" id="CHEBI:30616"/>
    </ligand>
</feature>
<feature type="binding site" evidence="1">
    <location>
        <position position="413"/>
    </location>
    <ligand>
        <name>ADP</name>
        <dbReference type="ChEBI" id="CHEBI:456216"/>
    </ligand>
</feature>
<accession>C3KBM0</accession>
<name>GLPK_PSEFS</name>
<comment type="function">
    <text evidence="1">Key enzyme in the regulation of glycerol uptake and metabolism. Catalyzes the phosphorylation of glycerol to yield sn-glycerol 3-phosphate.</text>
</comment>
<comment type="catalytic activity">
    <reaction evidence="1">
        <text>glycerol + ATP = sn-glycerol 3-phosphate + ADP + H(+)</text>
        <dbReference type="Rhea" id="RHEA:21644"/>
        <dbReference type="ChEBI" id="CHEBI:15378"/>
        <dbReference type="ChEBI" id="CHEBI:17754"/>
        <dbReference type="ChEBI" id="CHEBI:30616"/>
        <dbReference type="ChEBI" id="CHEBI:57597"/>
        <dbReference type="ChEBI" id="CHEBI:456216"/>
        <dbReference type="EC" id="2.7.1.30"/>
    </reaction>
</comment>
<comment type="activity regulation">
    <text evidence="1">Inhibited by fructose 1,6-bisphosphate (FBP).</text>
</comment>
<comment type="pathway">
    <text evidence="1">Polyol metabolism; glycerol degradation via glycerol kinase pathway; sn-glycerol 3-phosphate from glycerol: step 1/1.</text>
</comment>
<comment type="similarity">
    <text evidence="1">Belongs to the FGGY kinase family.</text>
</comment>
<evidence type="ECO:0000255" key="1">
    <source>
        <dbReference type="HAMAP-Rule" id="MF_00186"/>
    </source>
</evidence>
<sequence>MTDIQNKNYIIALDQGTTSSRAIIFDRDANVVCTAQREFTQHYPQAGWVEHDPMEIFATQSAVMVEALAQAGLHHDQVAAIGITNQRETTVVWDKVTGRPIYNAIVWQCRRSTEICQQLKRDGHEQYINDTTGLVTDPYFSGTKLKWILDNVEGSRERARNGELLFGTIDSWLIWKFTGGKTHVTDYTNASRTMLFNIHTLEWDAKMLEILDVPREMLPEVKSSSEIYGRTKSGIAIGGIAGDQQAALFGQMCVEAGQAKNTYGTGCFLLMNTGDKAVKSNHGMLTTIACGPRGEVAYALEGAVFNGGSTVQWLRDELKIIADATDTEYFAGKVKDSNGVYLVPAFTGLGAPYWDPYARGALFGLTRGVRVDHIIRAALESIAYQTRDVLDAMQQDSGERLKALRVDGGAVANNFLMQFQADILGTQVERPQMRETTALGAAYLAGLACGFWRSLDELRGKAVIEREFEPQLDEGAKEKLYAGWQKAVSRTRDWEPHEGAE</sequence>
<gene>
    <name evidence="1" type="primary">glpK</name>
    <name type="ordered locus">PFLU_1142</name>
</gene>
<protein>
    <recommendedName>
        <fullName evidence="1">Glycerol kinase</fullName>
        <ecNumber evidence="1">2.7.1.30</ecNumber>
    </recommendedName>
    <alternativeName>
        <fullName evidence="1">ATP:glycerol 3-phosphotransferase</fullName>
    </alternativeName>
    <alternativeName>
        <fullName evidence="1">Glycerokinase</fullName>
        <shortName evidence="1">GK</shortName>
    </alternativeName>
</protein>
<proteinExistence type="inferred from homology"/>
<dbReference type="EC" id="2.7.1.30" evidence="1"/>
<dbReference type="EMBL" id="AM181176">
    <property type="protein sequence ID" value="CAY47405.1"/>
    <property type="molecule type" value="Genomic_DNA"/>
</dbReference>
<dbReference type="RefSeq" id="WP_012722480.1">
    <property type="nucleotide sequence ID" value="NC_012660.1"/>
</dbReference>
<dbReference type="SMR" id="C3KBM0"/>
<dbReference type="STRING" id="294.SRM1_04467"/>
<dbReference type="PATRIC" id="fig|216595.4.peg.1377"/>
<dbReference type="eggNOG" id="COG0554">
    <property type="taxonomic scope" value="Bacteria"/>
</dbReference>
<dbReference type="HOGENOM" id="CLU_009281_2_3_6"/>
<dbReference type="OrthoDB" id="9805576at2"/>
<dbReference type="UniPathway" id="UPA00618">
    <property type="reaction ID" value="UER00672"/>
</dbReference>
<dbReference type="GO" id="GO:0005829">
    <property type="term" value="C:cytosol"/>
    <property type="evidence" value="ECO:0007669"/>
    <property type="project" value="TreeGrafter"/>
</dbReference>
<dbReference type="GO" id="GO:0005524">
    <property type="term" value="F:ATP binding"/>
    <property type="evidence" value="ECO:0007669"/>
    <property type="project" value="UniProtKB-UniRule"/>
</dbReference>
<dbReference type="GO" id="GO:0004370">
    <property type="term" value="F:glycerol kinase activity"/>
    <property type="evidence" value="ECO:0000250"/>
    <property type="project" value="UniProtKB"/>
</dbReference>
<dbReference type="GO" id="GO:0019563">
    <property type="term" value="P:glycerol catabolic process"/>
    <property type="evidence" value="ECO:0007669"/>
    <property type="project" value="UniProtKB-UniRule"/>
</dbReference>
<dbReference type="GO" id="GO:0006071">
    <property type="term" value="P:glycerol metabolic process"/>
    <property type="evidence" value="ECO:0000250"/>
    <property type="project" value="UniProtKB"/>
</dbReference>
<dbReference type="GO" id="GO:0006072">
    <property type="term" value="P:glycerol-3-phosphate metabolic process"/>
    <property type="evidence" value="ECO:0007669"/>
    <property type="project" value="InterPro"/>
</dbReference>
<dbReference type="CDD" id="cd07786">
    <property type="entry name" value="FGGY_EcGK_like"/>
    <property type="match status" value="1"/>
</dbReference>
<dbReference type="FunFam" id="3.30.420.40:FF:000007">
    <property type="entry name" value="Glycerol kinase"/>
    <property type="match status" value="1"/>
</dbReference>
<dbReference type="FunFam" id="3.30.420.40:FF:000008">
    <property type="entry name" value="Glycerol kinase"/>
    <property type="match status" value="1"/>
</dbReference>
<dbReference type="Gene3D" id="3.30.420.40">
    <property type="match status" value="2"/>
</dbReference>
<dbReference type="HAMAP" id="MF_00186">
    <property type="entry name" value="Glycerol_kin"/>
    <property type="match status" value="1"/>
</dbReference>
<dbReference type="InterPro" id="IPR043129">
    <property type="entry name" value="ATPase_NBD"/>
</dbReference>
<dbReference type="InterPro" id="IPR000577">
    <property type="entry name" value="Carb_kinase_FGGY"/>
</dbReference>
<dbReference type="InterPro" id="IPR018483">
    <property type="entry name" value="Carb_kinase_FGGY_CS"/>
</dbReference>
<dbReference type="InterPro" id="IPR018485">
    <property type="entry name" value="FGGY_C"/>
</dbReference>
<dbReference type="InterPro" id="IPR018484">
    <property type="entry name" value="FGGY_N"/>
</dbReference>
<dbReference type="InterPro" id="IPR005999">
    <property type="entry name" value="Glycerol_kin"/>
</dbReference>
<dbReference type="NCBIfam" id="TIGR01311">
    <property type="entry name" value="glycerol_kin"/>
    <property type="match status" value="1"/>
</dbReference>
<dbReference type="NCBIfam" id="NF000756">
    <property type="entry name" value="PRK00047.1"/>
    <property type="match status" value="1"/>
</dbReference>
<dbReference type="PANTHER" id="PTHR10196:SF69">
    <property type="entry name" value="GLYCEROL KINASE"/>
    <property type="match status" value="1"/>
</dbReference>
<dbReference type="PANTHER" id="PTHR10196">
    <property type="entry name" value="SUGAR KINASE"/>
    <property type="match status" value="1"/>
</dbReference>
<dbReference type="Pfam" id="PF02782">
    <property type="entry name" value="FGGY_C"/>
    <property type="match status" value="1"/>
</dbReference>
<dbReference type="Pfam" id="PF00370">
    <property type="entry name" value="FGGY_N"/>
    <property type="match status" value="1"/>
</dbReference>
<dbReference type="PIRSF" id="PIRSF000538">
    <property type="entry name" value="GlpK"/>
    <property type="match status" value="1"/>
</dbReference>
<dbReference type="SUPFAM" id="SSF53067">
    <property type="entry name" value="Actin-like ATPase domain"/>
    <property type="match status" value="2"/>
</dbReference>
<dbReference type="PROSITE" id="PS00933">
    <property type="entry name" value="FGGY_KINASES_1"/>
    <property type="match status" value="1"/>
</dbReference>
<dbReference type="PROSITE" id="PS00445">
    <property type="entry name" value="FGGY_KINASES_2"/>
    <property type="match status" value="1"/>
</dbReference>